<accession>A3NWA5</accession>
<evidence type="ECO:0000255" key="1">
    <source>
        <dbReference type="HAMAP-Rule" id="MF_00175"/>
    </source>
</evidence>
<evidence type="ECO:0000255" key="2">
    <source>
        <dbReference type="PROSITE-ProRule" id="PRU01250"/>
    </source>
</evidence>
<feature type="chain" id="PRO_1000024531" description="ATP-dependent Clp protease ATP-binding subunit ClpX">
    <location>
        <begin position="1"/>
        <end position="423"/>
    </location>
</feature>
<feature type="domain" description="ClpX-type ZB" evidence="2">
    <location>
        <begin position="3"/>
        <end position="56"/>
    </location>
</feature>
<feature type="binding site" evidence="2">
    <location>
        <position position="15"/>
    </location>
    <ligand>
        <name>Zn(2+)</name>
        <dbReference type="ChEBI" id="CHEBI:29105"/>
    </ligand>
</feature>
<feature type="binding site" evidence="2">
    <location>
        <position position="18"/>
    </location>
    <ligand>
        <name>Zn(2+)</name>
        <dbReference type="ChEBI" id="CHEBI:29105"/>
    </ligand>
</feature>
<feature type="binding site" evidence="2">
    <location>
        <position position="37"/>
    </location>
    <ligand>
        <name>Zn(2+)</name>
        <dbReference type="ChEBI" id="CHEBI:29105"/>
    </ligand>
</feature>
<feature type="binding site" evidence="2">
    <location>
        <position position="40"/>
    </location>
    <ligand>
        <name>Zn(2+)</name>
        <dbReference type="ChEBI" id="CHEBI:29105"/>
    </ligand>
</feature>
<feature type="binding site" evidence="1">
    <location>
        <begin position="122"/>
        <end position="129"/>
    </location>
    <ligand>
        <name>ATP</name>
        <dbReference type="ChEBI" id="CHEBI:30616"/>
    </ligand>
</feature>
<keyword id="KW-0067">ATP-binding</keyword>
<keyword id="KW-0143">Chaperone</keyword>
<keyword id="KW-0479">Metal-binding</keyword>
<keyword id="KW-0547">Nucleotide-binding</keyword>
<keyword id="KW-0862">Zinc</keyword>
<proteinExistence type="inferred from homology"/>
<comment type="function">
    <text evidence="1">ATP-dependent specificity component of the Clp protease. It directs the protease to specific substrates. Can perform chaperone functions in the absence of ClpP.</text>
</comment>
<comment type="subunit">
    <text evidence="1">Component of the ClpX-ClpP complex. Forms a hexameric ring that, in the presence of ATP, binds to fourteen ClpP subunits assembled into a disk-like structure with a central cavity, resembling the structure of eukaryotic proteasomes.</text>
</comment>
<comment type="similarity">
    <text evidence="1">Belongs to the ClpX chaperone family.</text>
</comment>
<sequence length="423" mass="46420">MADKKGSNSEKLLYCSFCGKSQHEVKKLIAGPSVFICDECIDLCNEIIRDEAAAAGVEASLSKSDLPSPQEIRDILDQYVIGQERAKKILAVAVYNHYKRLKHLDKKDDVELSKSNILLIGPTGSGKTLLAQTLARLLNVPFVIADATTLTEAGYVGEDVENIIQKLLQNCNYEVEKAQRGIVYIDEIDKISRKSDNPSITRDVSGEGVQQALLKLVEGTMASVPPQGGRKHPNQDFIQVDTTNILFICGGAFDGLEKVITDRTEKTGIGFGATVKSKQERDAGEVLREVEPEDLIKFGLIPELIGRLPVVATLGKLDEAALMKILVEPKNALVKQYQKLFAMERVELEIRPDALQAVARKAIRRKTGARGLRSIIEQALLDVMYELPTLKGVSKVIIDDNVIEGDGKPLLIYEDTPKVAGSN</sequence>
<gene>
    <name evidence="1" type="primary">clpX</name>
    <name type="ordered locus">BURPS1106A_2364</name>
</gene>
<dbReference type="EMBL" id="CP000572">
    <property type="protein sequence ID" value="ABN90041.1"/>
    <property type="molecule type" value="Genomic_DNA"/>
</dbReference>
<dbReference type="RefSeq" id="WP_004521258.1">
    <property type="nucleotide sequence ID" value="NC_009076.1"/>
</dbReference>
<dbReference type="SMR" id="A3NWA5"/>
<dbReference type="GeneID" id="93060594"/>
<dbReference type="KEGG" id="bpl:BURPS1106A_2364"/>
<dbReference type="HOGENOM" id="CLU_014218_8_2_4"/>
<dbReference type="Proteomes" id="UP000006738">
    <property type="component" value="Chromosome I"/>
</dbReference>
<dbReference type="GO" id="GO:0009376">
    <property type="term" value="C:HslUV protease complex"/>
    <property type="evidence" value="ECO:0007669"/>
    <property type="project" value="TreeGrafter"/>
</dbReference>
<dbReference type="GO" id="GO:0005524">
    <property type="term" value="F:ATP binding"/>
    <property type="evidence" value="ECO:0007669"/>
    <property type="project" value="UniProtKB-UniRule"/>
</dbReference>
<dbReference type="GO" id="GO:0016887">
    <property type="term" value="F:ATP hydrolysis activity"/>
    <property type="evidence" value="ECO:0007669"/>
    <property type="project" value="InterPro"/>
</dbReference>
<dbReference type="GO" id="GO:0140662">
    <property type="term" value="F:ATP-dependent protein folding chaperone"/>
    <property type="evidence" value="ECO:0007669"/>
    <property type="project" value="InterPro"/>
</dbReference>
<dbReference type="GO" id="GO:0046983">
    <property type="term" value="F:protein dimerization activity"/>
    <property type="evidence" value="ECO:0007669"/>
    <property type="project" value="InterPro"/>
</dbReference>
<dbReference type="GO" id="GO:0051082">
    <property type="term" value="F:unfolded protein binding"/>
    <property type="evidence" value="ECO:0007669"/>
    <property type="project" value="UniProtKB-UniRule"/>
</dbReference>
<dbReference type="GO" id="GO:0008270">
    <property type="term" value="F:zinc ion binding"/>
    <property type="evidence" value="ECO:0007669"/>
    <property type="project" value="InterPro"/>
</dbReference>
<dbReference type="GO" id="GO:0051301">
    <property type="term" value="P:cell division"/>
    <property type="evidence" value="ECO:0007669"/>
    <property type="project" value="TreeGrafter"/>
</dbReference>
<dbReference type="GO" id="GO:0051603">
    <property type="term" value="P:proteolysis involved in protein catabolic process"/>
    <property type="evidence" value="ECO:0007669"/>
    <property type="project" value="TreeGrafter"/>
</dbReference>
<dbReference type="CDD" id="cd19497">
    <property type="entry name" value="RecA-like_ClpX"/>
    <property type="match status" value="1"/>
</dbReference>
<dbReference type="FunFam" id="1.10.8.60:FF:000002">
    <property type="entry name" value="ATP-dependent Clp protease ATP-binding subunit ClpX"/>
    <property type="match status" value="1"/>
</dbReference>
<dbReference type="FunFam" id="3.40.50.300:FF:000005">
    <property type="entry name" value="ATP-dependent Clp protease ATP-binding subunit ClpX"/>
    <property type="match status" value="1"/>
</dbReference>
<dbReference type="Gene3D" id="1.10.8.60">
    <property type="match status" value="1"/>
</dbReference>
<dbReference type="Gene3D" id="6.20.220.10">
    <property type="entry name" value="ClpX chaperone, C4-type zinc finger domain"/>
    <property type="match status" value="1"/>
</dbReference>
<dbReference type="Gene3D" id="3.40.50.300">
    <property type="entry name" value="P-loop containing nucleotide triphosphate hydrolases"/>
    <property type="match status" value="1"/>
</dbReference>
<dbReference type="HAMAP" id="MF_00175">
    <property type="entry name" value="ClpX"/>
    <property type="match status" value="1"/>
</dbReference>
<dbReference type="InterPro" id="IPR003593">
    <property type="entry name" value="AAA+_ATPase"/>
</dbReference>
<dbReference type="InterPro" id="IPR050052">
    <property type="entry name" value="ATP-dep_Clp_protease_ClpX"/>
</dbReference>
<dbReference type="InterPro" id="IPR003959">
    <property type="entry name" value="ATPase_AAA_core"/>
</dbReference>
<dbReference type="InterPro" id="IPR019489">
    <property type="entry name" value="Clp_ATPase_C"/>
</dbReference>
<dbReference type="InterPro" id="IPR004487">
    <property type="entry name" value="Clp_protease_ATP-bd_su_ClpX"/>
</dbReference>
<dbReference type="InterPro" id="IPR046425">
    <property type="entry name" value="ClpX_bact"/>
</dbReference>
<dbReference type="InterPro" id="IPR027417">
    <property type="entry name" value="P-loop_NTPase"/>
</dbReference>
<dbReference type="InterPro" id="IPR010603">
    <property type="entry name" value="Znf_CppX_C4"/>
</dbReference>
<dbReference type="InterPro" id="IPR038366">
    <property type="entry name" value="Znf_CppX_C4_sf"/>
</dbReference>
<dbReference type="NCBIfam" id="TIGR00382">
    <property type="entry name" value="clpX"/>
    <property type="match status" value="1"/>
</dbReference>
<dbReference type="NCBIfam" id="NF003745">
    <property type="entry name" value="PRK05342.1"/>
    <property type="match status" value="1"/>
</dbReference>
<dbReference type="PANTHER" id="PTHR48102:SF7">
    <property type="entry name" value="ATP-DEPENDENT CLP PROTEASE ATP-BINDING SUBUNIT CLPX-LIKE, MITOCHONDRIAL"/>
    <property type="match status" value="1"/>
</dbReference>
<dbReference type="PANTHER" id="PTHR48102">
    <property type="entry name" value="ATP-DEPENDENT CLP PROTEASE ATP-BINDING SUBUNIT CLPX-LIKE, MITOCHONDRIAL-RELATED"/>
    <property type="match status" value="1"/>
</dbReference>
<dbReference type="Pfam" id="PF07724">
    <property type="entry name" value="AAA_2"/>
    <property type="match status" value="1"/>
</dbReference>
<dbReference type="Pfam" id="PF10431">
    <property type="entry name" value="ClpB_D2-small"/>
    <property type="match status" value="1"/>
</dbReference>
<dbReference type="Pfam" id="PF06689">
    <property type="entry name" value="zf-C4_ClpX"/>
    <property type="match status" value="1"/>
</dbReference>
<dbReference type="SMART" id="SM00382">
    <property type="entry name" value="AAA"/>
    <property type="match status" value="1"/>
</dbReference>
<dbReference type="SMART" id="SM01086">
    <property type="entry name" value="ClpB_D2-small"/>
    <property type="match status" value="1"/>
</dbReference>
<dbReference type="SMART" id="SM00994">
    <property type="entry name" value="zf-C4_ClpX"/>
    <property type="match status" value="1"/>
</dbReference>
<dbReference type="SUPFAM" id="SSF57716">
    <property type="entry name" value="Glucocorticoid receptor-like (DNA-binding domain)"/>
    <property type="match status" value="1"/>
</dbReference>
<dbReference type="SUPFAM" id="SSF52540">
    <property type="entry name" value="P-loop containing nucleoside triphosphate hydrolases"/>
    <property type="match status" value="1"/>
</dbReference>
<dbReference type="PROSITE" id="PS51902">
    <property type="entry name" value="CLPX_ZB"/>
    <property type="match status" value="1"/>
</dbReference>
<reference key="1">
    <citation type="journal article" date="2010" name="Genome Biol. Evol.">
        <title>Continuing evolution of Burkholderia mallei through genome reduction and large-scale rearrangements.</title>
        <authorList>
            <person name="Losada L."/>
            <person name="Ronning C.M."/>
            <person name="DeShazer D."/>
            <person name="Woods D."/>
            <person name="Fedorova N."/>
            <person name="Kim H.S."/>
            <person name="Shabalina S.A."/>
            <person name="Pearson T.R."/>
            <person name="Brinkac L."/>
            <person name="Tan P."/>
            <person name="Nandi T."/>
            <person name="Crabtree J."/>
            <person name="Badger J."/>
            <person name="Beckstrom-Sternberg S."/>
            <person name="Saqib M."/>
            <person name="Schutzer S.E."/>
            <person name="Keim P."/>
            <person name="Nierman W.C."/>
        </authorList>
    </citation>
    <scope>NUCLEOTIDE SEQUENCE [LARGE SCALE GENOMIC DNA]</scope>
    <source>
        <strain>1106a</strain>
    </source>
</reference>
<organism>
    <name type="scientific">Burkholderia pseudomallei (strain 1106a)</name>
    <dbReference type="NCBI Taxonomy" id="357348"/>
    <lineage>
        <taxon>Bacteria</taxon>
        <taxon>Pseudomonadati</taxon>
        <taxon>Pseudomonadota</taxon>
        <taxon>Betaproteobacteria</taxon>
        <taxon>Burkholderiales</taxon>
        <taxon>Burkholderiaceae</taxon>
        <taxon>Burkholderia</taxon>
        <taxon>pseudomallei group</taxon>
    </lineage>
</organism>
<protein>
    <recommendedName>
        <fullName evidence="1">ATP-dependent Clp protease ATP-binding subunit ClpX</fullName>
    </recommendedName>
</protein>
<name>CLPX_BURP0</name>